<proteinExistence type="inferred from homology"/>
<keyword id="KW-0067">ATP-binding</keyword>
<keyword id="KW-0963">Cytoplasm</keyword>
<keyword id="KW-0436">Ligase</keyword>
<keyword id="KW-0547">Nucleotide-binding</keyword>
<name>DLTA_LISMC</name>
<gene>
    <name evidence="1" type="primary">dltA</name>
    <name type="ordered locus">Lm4b_00994</name>
</gene>
<organism>
    <name type="scientific">Listeria monocytogenes serotype 4b (strain CLIP80459)</name>
    <dbReference type="NCBI Taxonomy" id="568819"/>
    <lineage>
        <taxon>Bacteria</taxon>
        <taxon>Bacillati</taxon>
        <taxon>Bacillota</taxon>
        <taxon>Bacilli</taxon>
        <taxon>Bacillales</taxon>
        <taxon>Listeriaceae</taxon>
        <taxon>Listeria</taxon>
    </lineage>
</organism>
<accession>C1L1P5</accession>
<comment type="function">
    <text evidence="1">Catalyzes the first step in the D-alanylation of lipoteichoic acid (LTA), the activation of D-alanine and its transfer onto the D-alanyl carrier protein (Dcp) DltC. In an ATP-dependent two-step reaction, forms a high energy D-alanyl-AMP intermediate, followed by transfer of the D-alanyl residue as a thiol ester to the phosphopantheinyl prosthetic group of the Dcp. D-alanylation of LTA plays an important role in modulating the properties of the cell wall in Gram-positive bacteria, influencing the net charge of the cell wall.</text>
</comment>
<comment type="catalytic activity">
    <reaction evidence="1">
        <text>holo-[D-alanyl-carrier protein] + D-alanine + ATP = D-alanyl-[D-alanyl-carrier protein] + AMP + diphosphate</text>
        <dbReference type="Rhea" id="RHEA:55132"/>
        <dbReference type="Rhea" id="RHEA-COMP:14102"/>
        <dbReference type="Rhea" id="RHEA-COMP:14103"/>
        <dbReference type="ChEBI" id="CHEBI:30616"/>
        <dbReference type="ChEBI" id="CHEBI:33019"/>
        <dbReference type="ChEBI" id="CHEBI:57416"/>
        <dbReference type="ChEBI" id="CHEBI:64479"/>
        <dbReference type="ChEBI" id="CHEBI:138620"/>
        <dbReference type="ChEBI" id="CHEBI:456215"/>
        <dbReference type="EC" id="6.2.1.54"/>
    </reaction>
</comment>
<comment type="pathway">
    <text evidence="1">Cell wall biogenesis; lipoteichoic acid biosynthesis.</text>
</comment>
<comment type="subcellular location">
    <subcellularLocation>
        <location evidence="1">Cytoplasm</location>
    </subcellularLocation>
</comment>
<comment type="similarity">
    <text evidence="1">Belongs to the ATP-dependent AMP-binding enzyme family. DltA subfamily.</text>
</comment>
<protein>
    <recommendedName>
        <fullName evidence="1">D-alanine--D-alanyl carrier protein ligase</fullName>
        <shortName evidence="1">DCL</shortName>
        <ecNumber evidence="1">6.2.1.54</ecNumber>
    </recommendedName>
    <alternativeName>
        <fullName evidence="1">D-alanine--poly(phosphoribitol) ligase subunit 1</fullName>
    </alternativeName>
    <alternativeName>
        <fullName evidence="1">D-alanine-activating enzyme</fullName>
        <shortName evidence="1">DAE</shortName>
    </alternativeName>
</protein>
<reference key="1">
    <citation type="journal article" date="2012" name="BMC Genomics">
        <title>Comparative genomics and transcriptomics of lineages I, II, and III strains of Listeria monocytogenes.</title>
        <authorList>
            <person name="Hain T."/>
            <person name="Ghai R."/>
            <person name="Billion A."/>
            <person name="Kuenne C.T."/>
            <person name="Steinweg C."/>
            <person name="Izar B."/>
            <person name="Mohamed W."/>
            <person name="Mraheil M."/>
            <person name="Domann E."/>
            <person name="Schaffrath S."/>
            <person name="Karst U."/>
            <person name="Goesmann A."/>
            <person name="Oehm S."/>
            <person name="Puhler A."/>
            <person name="Merkl R."/>
            <person name="Vorwerk S."/>
            <person name="Glaser P."/>
            <person name="Garrido P."/>
            <person name="Rusniok C."/>
            <person name="Buchrieser C."/>
            <person name="Goebel W."/>
            <person name="Chakraborty T."/>
        </authorList>
    </citation>
    <scope>NUCLEOTIDE SEQUENCE [LARGE SCALE GENOMIC DNA]</scope>
    <source>
        <strain>CLIP80459</strain>
    </source>
</reference>
<evidence type="ECO:0000255" key="1">
    <source>
        <dbReference type="HAMAP-Rule" id="MF_00593"/>
    </source>
</evidence>
<sequence>MTTSIIERIDAWAEKTPDFPCYEYAGTRLSYKELKRQSDAFGSFLLKTLNTDKEKPIIVYGHMSPLMLVAFLGSIKSGRAYVPVDVSMPVERIEQIKKAADPSLFICTEELPSNLTITGCPVLTQDQLMDALEKHFGEVPDKEACVKNDDNYYIIYTSGSTGNPKGVQISQNNLVSFSNWILQDFSLSQGLRFLNQAPFSFDLSVMDLYPSLLSGGTLVPLDKTITANMKDLYREIPAQNLDVWVSTPSFADLCLLDDNFNQENNPGLIHFLFCGEVLAKKTASELLNRFPDAVIYNTYGPTEATVAVTQVKVTREVIDAYPSLPLGVIKPDMRLHIVDQETGEVLPEGEKGEIVLIGASVSKGYLNEPEKTDQVFFDYKGYQAYRTGDSGIIKDGYLFFQGRLDFQIKLHGYRIELEDIENNLKKVSYIQNCAIIPKMKDEKVDMLVAQVIPTNHDFEKEYQLSAAIKNELKEFMPAYMIPRKWIYKTEFPLTMNGKIDRKALNSEVNK</sequence>
<dbReference type="EC" id="6.2.1.54" evidence="1"/>
<dbReference type="EMBL" id="FM242711">
    <property type="protein sequence ID" value="CAS04760.1"/>
    <property type="molecule type" value="Genomic_DNA"/>
</dbReference>
<dbReference type="RefSeq" id="WP_012681203.1">
    <property type="nucleotide sequence ID" value="NC_012488.1"/>
</dbReference>
<dbReference type="SMR" id="C1L1P5"/>
<dbReference type="KEGG" id="lmc:Lm4b_00994"/>
<dbReference type="HOGENOM" id="CLU_000022_2_12_9"/>
<dbReference type="UniPathway" id="UPA00556"/>
<dbReference type="GO" id="GO:0005737">
    <property type="term" value="C:cytoplasm"/>
    <property type="evidence" value="ECO:0007669"/>
    <property type="project" value="UniProtKB-SubCell"/>
</dbReference>
<dbReference type="GO" id="GO:0005524">
    <property type="term" value="F:ATP binding"/>
    <property type="evidence" value="ECO:0007669"/>
    <property type="project" value="UniProtKB-KW"/>
</dbReference>
<dbReference type="GO" id="GO:0047473">
    <property type="term" value="F:D-alanine [D-alanyl carrier protein] ligase activity"/>
    <property type="evidence" value="ECO:0007669"/>
    <property type="project" value="UniProtKB-UniRule"/>
</dbReference>
<dbReference type="GO" id="GO:0070395">
    <property type="term" value="P:lipoteichoic acid biosynthetic process"/>
    <property type="evidence" value="ECO:0007669"/>
    <property type="project" value="UniProtKB-UniRule"/>
</dbReference>
<dbReference type="CDD" id="cd05945">
    <property type="entry name" value="DltA"/>
    <property type="match status" value="1"/>
</dbReference>
<dbReference type="FunFam" id="3.30.300.30:FF:000012">
    <property type="entry name" value="D-alanine--D-alanyl carrier protein ligase"/>
    <property type="match status" value="1"/>
</dbReference>
<dbReference type="Gene3D" id="3.30.300.30">
    <property type="match status" value="1"/>
</dbReference>
<dbReference type="Gene3D" id="3.40.50.12780">
    <property type="entry name" value="N-terminal domain of ligase-like"/>
    <property type="match status" value="1"/>
</dbReference>
<dbReference type="HAMAP" id="MF_00593">
    <property type="entry name" value="DltA"/>
    <property type="match status" value="1"/>
</dbReference>
<dbReference type="InterPro" id="IPR010071">
    <property type="entry name" value="AA_adenyl_dom"/>
</dbReference>
<dbReference type="InterPro" id="IPR025110">
    <property type="entry name" value="AMP-bd_C"/>
</dbReference>
<dbReference type="InterPro" id="IPR045851">
    <property type="entry name" value="AMP-bd_C_sf"/>
</dbReference>
<dbReference type="InterPro" id="IPR020845">
    <property type="entry name" value="AMP-binding_CS"/>
</dbReference>
<dbReference type="InterPro" id="IPR000873">
    <property type="entry name" value="AMP-dep_synth/lig_dom"/>
</dbReference>
<dbReference type="InterPro" id="IPR042099">
    <property type="entry name" value="ANL_N_sf"/>
</dbReference>
<dbReference type="InterPro" id="IPR010072">
    <property type="entry name" value="DltA"/>
</dbReference>
<dbReference type="InterPro" id="IPR044507">
    <property type="entry name" value="DltA-like"/>
</dbReference>
<dbReference type="NCBIfam" id="TIGR01733">
    <property type="entry name" value="AA-adenyl-dom"/>
    <property type="match status" value="1"/>
</dbReference>
<dbReference type="NCBIfam" id="TIGR01734">
    <property type="entry name" value="D-ala-DACP-lig"/>
    <property type="match status" value="1"/>
</dbReference>
<dbReference type="NCBIfam" id="NF003417">
    <property type="entry name" value="PRK04813.1"/>
    <property type="match status" value="1"/>
</dbReference>
<dbReference type="PANTHER" id="PTHR45398">
    <property type="match status" value="1"/>
</dbReference>
<dbReference type="PANTHER" id="PTHR45398:SF1">
    <property type="entry name" value="ENZYME, PUTATIVE (JCVI)-RELATED"/>
    <property type="match status" value="1"/>
</dbReference>
<dbReference type="Pfam" id="PF00501">
    <property type="entry name" value="AMP-binding"/>
    <property type="match status" value="1"/>
</dbReference>
<dbReference type="Pfam" id="PF13193">
    <property type="entry name" value="AMP-binding_C"/>
    <property type="match status" value="1"/>
</dbReference>
<dbReference type="SUPFAM" id="SSF56801">
    <property type="entry name" value="Acetyl-CoA synthetase-like"/>
    <property type="match status" value="1"/>
</dbReference>
<dbReference type="PROSITE" id="PS00455">
    <property type="entry name" value="AMP_BINDING"/>
    <property type="match status" value="1"/>
</dbReference>
<feature type="chain" id="PRO_1000212175" description="D-alanine--D-alanyl carrier protein ligase">
    <location>
        <begin position="1"/>
        <end position="510"/>
    </location>
</feature>
<feature type="binding site" evidence="1">
    <location>
        <begin position="157"/>
        <end position="158"/>
    </location>
    <ligand>
        <name>ATP</name>
        <dbReference type="ChEBI" id="CHEBI:30616"/>
    </ligand>
</feature>
<feature type="binding site" evidence="1">
    <location>
        <position position="202"/>
    </location>
    <ligand>
        <name>D-alanine</name>
        <dbReference type="ChEBI" id="CHEBI:57416"/>
    </ligand>
</feature>
<feature type="binding site" evidence="1">
    <location>
        <begin position="297"/>
        <end position="302"/>
    </location>
    <ligand>
        <name>ATP</name>
        <dbReference type="ChEBI" id="CHEBI:30616"/>
    </ligand>
</feature>
<feature type="binding site" evidence="1">
    <location>
        <position position="306"/>
    </location>
    <ligand>
        <name>D-alanine</name>
        <dbReference type="ChEBI" id="CHEBI:57416"/>
    </ligand>
</feature>
<feature type="binding site" evidence="1">
    <location>
        <position position="389"/>
    </location>
    <ligand>
        <name>ATP</name>
        <dbReference type="ChEBI" id="CHEBI:30616"/>
    </ligand>
</feature>
<feature type="binding site" evidence="1">
    <location>
        <position position="498"/>
    </location>
    <ligand>
        <name>ATP</name>
        <dbReference type="ChEBI" id="CHEBI:30616"/>
    </ligand>
</feature>
<feature type="binding site" evidence="1">
    <location>
        <position position="498"/>
    </location>
    <ligand>
        <name>D-alanine</name>
        <dbReference type="ChEBI" id="CHEBI:57416"/>
    </ligand>
</feature>